<keyword id="KW-0030">Aminoacyl-tRNA synthetase</keyword>
<keyword id="KW-0067">ATP-binding</keyword>
<keyword id="KW-0963">Cytoplasm</keyword>
<keyword id="KW-0436">Ligase</keyword>
<keyword id="KW-0547">Nucleotide-binding</keyword>
<keyword id="KW-0648">Protein biosynthesis</keyword>
<evidence type="ECO:0000250" key="1"/>
<evidence type="ECO:0000255" key="2">
    <source>
        <dbReference type="HAMAP-Rule" id="MF_00127"/>
    </source>
</evidence>
<evidence type="ECO:0000305" key="3"/>
<comment type="catalytic activity">
    <reaction evidence="2">
        <text>tRNA(His) + L-histidine + ATP = L-histidyl-tRNA(His) + AMP + diphosphate + H(+)</text>
        <dbReference type="Rhea" id="RHEA:17313"/>
        <dbReference type="Rhea" id="RHEA-COMP:9665"/>
        <dbReference type="Rhea" id="RHEA-COMP:9689"/>
        <dbReference type="ChEBI" id="CHEBI:15378"/>
        <dbReference type="ChEBI" id="CHEBI:30616"/>
        <dbReference type="ChEBI" id="CHEBI:33019"/>
        <dbReference type="ChEBI" id="CHEBI:57595"/>
        <dbReference type="ChEBI" id="CHEBI:78442"/>
        <dbReference type="ChEBI" id="CHEBI:78527"/>
        <dbReference type="ChEBI" id="CHEBI:456215"/>
        <dbReference type="EC" id="6.1.1.21"/>
    </reaction>
</comment>
<comment type="subunit">
    <text evidence="2">Homodimer.</text>
</comment>
<comment type="subcellular location">
    <subcellularLocation>
        <location evidence="2">Cytoplasm</location>
    </subcellularLocation>
</comment>
<comment type="similarity">
    <text evidence="2">Belongs to the class-II aminoacyl-tRNA synthetase family.</text>
</comment>
<comment type="sequence caution" evidence="3">
    <conflict type="erroneous initiation">
        <sequence resource="EMBL-CDS" id="AAX72933"/>
    </conflict>
</comment>
<name>SYH_STRPM</name>
<dbReference type="EC" id="6.1.1.21" evidence="2"/>
<dbReference type="EMBL" id="CP000056">
    <property type="protein sequence ID" value="AAX72933.1"/>
    <property type="status" value="ALT_INIT"/>
    <property type="molecule type" value="Genomic_DNA"/>
</dbReference>
<dbReference type="RefSeq" id="WP_011285292.1">
    <property type="nucleotide sequence ID" value="NC_007296.2"/>
</dbReference>
<dbReference type="SMR" id="Q48QS7"/>
<dbReference type="KEGG" id="spb:M28_Spy1823"/>
<dbReference type="HOGENOM" id="CLU_025113_1_1_9"/>
<dbReference type="GO" id="GO:0005737">
    <property type="term" value="C:cytoplasm"/>
    <property type="evidence" value="ECO:0007669"/>
    <property type="project" value="UniProtKB-SubCell"/>
</dbReference>
<dbReference type="GO" id="GO:0005524">
    <property type="term" value="F:ATP binding"/>
    <property type="evidence" value="ECO:0007669"/>
    <property type="project" value="UniProtKB-UniRule"/>
</dbReference>
<dbReference type="GO" id="GO:0140096">
    <property type="term" value="F:catalytic activity, acting on a protein"/>
    <property type="evidence" value="ECO:0007669"/>
    <property type="project" value="UniProtKB-ARBA"/>
</dbReference>
<dbReference type="GO" id="GO:0004821">
    <property type="term" value="F:histidine-tRNA ligase activity"/>
    <property type="evidence" value="ECO:0007669"/>
    <property type="project" value="UniProtKB-UniRule"/>
</dbReference>
<dbReference type="GO" id="GO:0016740">
    <property type="term" value="F:transferase activity"/>
    <property type="evidence" value="ECO:0007669"/>
    <property type="project" value="UniProtKB-ARBA"/>
</dbReference>
<dbReference type="GO" id="GO:0006427">
    <property type="term" value="P:histidyl-tRNA aminoacylation"/>
    <property type="evidence" value="ECO:0007669"/>
    <property type="project" value="UniProtKB-UniRule"/>
</dbReference>
<dbReference type="CDD" id="cd00773">
    <property type="entry name" value="HisRS-like_core"/>
    <property type="match status" value="1"/>
</dbReference>
<dbReference type="CDD" id="cd00859">
    <property type="entry name" value="HisRS_anticodon"/>
    <property type="match status" value="1"/>
</dbReference>
<dbReference type="FunFam" id="3.30.930.10:FF:000005">
    <property type="entry name" value="Histidine--tRNA ligase"/>
    <property type="match status" value="1"/>
</dbReference>
<dbReference type="Gene3D" id="3.40.50.800">
    <property type="entry name" value="Anticodon-binding domain"/>
    <property type="match status" value="1"/>
</dbReference>
<dbReference type="Gene3D" id="3.30.930.10">
    <property type="entry name" value="Bira Bifunctional Protein, Domain 2"/>
    <property type="match status" value="1"/>
</dbReference>
<dbReference type="HAMAP" id="MF_00127">
    <property type="entry name" value="His_tRNA_synth"/>
    <property type="match status" value="1"/>
</dbReference>
<dbReference type="InterPro" id="IPR006195">
    <property type="entry name" value="aa-tRNA-synth_II"/>
</dbReference>
<dbReference type="InterPro" id="IPR045864">
    <property type="entry name" value="aa-tRNA-synth_II/BPL/LPL"/>
</dbReference>
<dbReference type="InterPro" id="IPR004154">
    <property type="entry name" value="Anticodon-bd"/>
</dbReference>
<dbReference type="InterPro" id="IPR036621">
    <property type="entry name" value="Anticodon-bd_dom_sf"/>
</dbReference>
<dbReference type="InterPro" id="IPR015807">
    <property type="entry name" value="His-tRNA-ligase"/>
</dbReference>
<dbReference type="InterPro" id="IPR041715">
    <property type="entry name" value="HisRS-like_core"/>
</dbReference>
<dbReference type="InterPro" id="IPR004516">
    <property type="entry name" value="HisRS/HisZ"/>
</dbReference>
<dbReference type="InterPro" id="IPR033656">
    <property type="entry name" value="HisRS_anticodon"/>
</dbReference>
<dbReference type="NCBIfam" id="TIGR00442">
    <property type="entry name" value="hisS"/>
    <property type="match status" value="1"/>
</dbReference>
<dbReference type="PANTHER" id="PTHR43707:SF1">
    <property type="entry name" value="HISTIDINE--TRNA LIGASE, MITOCHONDRIAL-RELATED"/>
    <property type="match status" value="1"/>
</dbReference>
<dbReference type="PANTHER" id="PTHR43707">
    <property type="entry name" value="HISTIDYL-TRNA SYNTHETASE"/>
    <property type="match status" value="1"/>
</dbReference>
<dbReference type="Pfam" id="PF03129">
    <property type="entry name" value="HGTP_anticodon"/>
    <property type="match status" value="1"/>
</dbReference>
<dbReference type="Pfam" id="PF13393">
    <property type="entry name" value="tRNA-synt_His"/>
    <property type="match status" value="1"/>
</dbReference>
<dbReference type="PIRSF" id="PIRSF001549">
    <property type="entry name" value="His-tRNA_synth"/>
    <property type="match status" value="1"/>
</dbReference>
<dbReference type="SUPFAM" id="SSF52954">
    <property type="entry name" value="Class II aaRS ABD-related"/>
    <property type="match status" value="1"/>
</dbReference>
<dbReference type="SUPFAM" id="SSF55681">
    <property type="entry name" value="Class II aaRS and biotin synthetases"/>
    <property type="match status" value="1"/>
</dbReference>
<dbReference type="PROSITE" id="PS50862">
    <property type="entry name" value="AA_TRNA_LIGASE_II"/>
    <property type="match status" value="1"/>
</dbReference>
<reference key="1">
    <citation type="journal article" date="2005" name="J. Infect. Dis.">
        <title>Genome sequence of a serotype M28 strain of group A Streptococcus: potential new insights into puerperal sepsis and bacterial disease specificity.</title>
        <authorList>
            <person name="Green N.M."/>
            <person name="Zhang S."/>
            <person name="Porcella S.F."/>
            <person name="Nagiec M.J."/>
            <person name="Barbian K.D."/>
            <person name="Beres S.B."/>
            <person name="Lefebvre R.B."/>
            <person name="Musser J.M."/>
        </authorList>
    </citation>
    <scope>NUCLEOTIDE SEQUENCE [LARGE SCALE GENOMIC DNA]</scope>
    <source>
        <strain>MGAS6180</strain>
    </source>
</reference>
<organism>
    <name type="scientific">Streptococcus pyogenes serotype M28 (strain MGAS6180)</name>
    <dbReference type="NCBI Taxonomy" id="319701"/>
    <lineage>
        <taxon>Bacteria</taxon>
        <taxon>Bacillati</taxon>
        <taxon>Bacillota</taxon>
        <taxon>Bacilli</taxon>
        <taxon>Lactobacillales</taxon>
        <taxon>Streptococcaceae</taxon>
        <taxon>Streptococcus</taxon>
    </lineage>
</organism>
<feature type="initiator methionine" description="Removed" evidence="1">
    <location>
        <position position="1"/>
    </location>
</feature>
<feature type="chain" id="PRO_0000136268" description="Histidine--tRNA ligase">
    <location>
        <begin position="2"/>
        <end position="426"/>
    </location>
</feature>
<sequence>MKLQKPKGTQDILPEDAAKWQYVESVARDTFSQYNYGEIRTPMFEHYEVISRSVGDTTDIVTKEMYDFYDKGDRHITLRPEGTAPVVRSYVENKLFAPEVQKPVKLYYIGSMFRYERPQAGRLREFHQIGVECFGAANPATDVETIAMAYHLFEKLGIKDVTLHLNSLGSPESRSAYRQTLIDYLTPMRDQLSKDSQRRLDENPLRVLDSKEKEDKLAVEKAPSILDYLDEESQAHFEAVKDMLEALDIPYVIDTNMVRGLDYYNHTIFEFITSVEGSDLTICAGGRYDSLVGYFGGPETPGFGFGLGLERLLMIIEKQGITLPIETEMDVYLAVLGDSANSKALELVQAIRRQGFTAERDYLGRKIKAQFKSADTFKAKLVMTLGESEVEAGKAVIKNNRSRQEVEVSFEDMMTNFANISEQLLS</sequence>
<accession>Q48QS7</accession>
<protein>
    <recommendedName>
        <fullName evidence="2">Histidine--tRNA ligase</fullName>
        <ecNumber evidence="2">6.1.1.21</ecNumber>
    </recommendedName>
    <alternativeName>
        <fullName evidence="2">Histidyl-tRNA synthetase</fullName>
        <shortName evidence="2">HisRS</shortName>
    </alternativeName>
</protein>
<gene>
    <name evidence="2" type="primary">hisS</name>
    <name type="ordered locus">M28_Spy1823</name>
</gene>
<proteinExistence type="inferred from homology"/>